<comment type="function">
    <text evidence="2">With CysD forms the ATP sulfurylase (ATPS) that catalyzes the adenylation of sulfate producing adenosine 5'-phosphosulfate (APS) and diphosphate, the first enzymatic step in sulfur assimilation pathway. APS synthesis involves the formation of a high-energy phosphoric-sulfuric acid anhydride bond driven by GTP hydrolysis by CysN coupled to ATP hydrolysis by CysD.</text>
</comment>
<comment type="catalytic activity">
    <reaction evidence="2">
        <text>sulfate + ATP + H(+) = adenosine 5'-phosphosulfate + diphosphate</text>
        <dbReference type="Rhea" id="RHEA:18133"/>
        <dbReference type="ChEBI" id="CHEBI:15378"/>
        <dbReference type="ChEBI" id="CHEBI:16189"/>
        <dbReference type="ChEBI" id="CHEBI:30616"/>
        <dbReference type="ChEBI" id="CHEBI:33019"/>
        <dbReference type="ChEBI" id="CHEBI:58243"/>
        <dbReference type="EC" id="2.7.7.4"/>
    </reaction>
</comment>
<comment type="pathway">
    <text evidence="2">Sulfur metabolism; hydrogen sulfide biosynthesis; sulfite from sulfate: step 1/3.</text>
</comment>
<comment type="subunit">
    <text evidence="2">Heterodimer composed of CysD, the smaller subunit, and CysN.</text>
</comment>
<comment type="similarity">
    <text evidence="2">Belongs to the TRAFAC class translation factor GTPase superfamily. Classic translation factor GTPase family. CysN/NodQ subfamily.</text>
</comment>
<evidence type="ECO:0000250" key="1"/>
<evidence type="ECO:0000255" key="2">
    <source>
        <dbReference type="HAMAP-Rule" id="MF_00062"/>
    </source>
</evidence>
<accession>B8D7V3</accession>
<name>CYSN_BUCAT</name>
<dbReference type="EC" id="2.7.7.4" evidence="2"/>
<dbReference type="EMBL" id="CP001158">
    <property type="protein sequence ID" value="ACL30218.1"/>
    <property type="molecule type" value="Genomic_DNA"/>
</dbReference>
<dbReference type="RefSeq" id="WP_012619540.1">
    <property type="nucleotide sequence ID" value="NC_011834.1"/>
</dbReference>
<dbReference type="SMR" id="B8D7V3"/>
<dbReference type="KEGG" id="bau:BUAPTUC7_417"/>
<dbReference type="HOGENOM" id="CLU_007265_5_2_6"/>
<dbReference type="UniPathway" id="UPA00140">
    <property type="reaction ID" value="UER00204"/>
</dbReference>
<dbReference type="GO" id="GO:0005524">
    <property type="term" value="F:ATP binding"/>
    <property type="evidence" value="ECO:0007669"/>
    <property type="project" value="UniProtKB-KW"/>
</dbReference>
<dbReference type="GO" id="GO:0005525">
    <property type="term" value="F:GTP binding"/>
    <property type="evidence" value="ECO:0007669"/>
    <property type="project" value="UniProtKB-UniRule"/>
</dbReference>
<dbReference type="GO" id="GO:0003924">
    <property type="term" value="F:GTPase activity"/>
    <property type="evidence" value="ECO:0007669"/>
    <property type="project" value="InterPro"/>
</dbReference>
<dbReference type="GO" id="GO:0004781">
    <property type="term" value="F:sulfate adenylyltransferase (ATP) activity"/>
    <property type="evidence" value="ECO:0007669"/>
    <property type="project" value="UniProtKB-UniRule"/>
</dbReference>
<dbReference type="GO" id="GO:0070814">
    <property type="term" value="P:hydrogen sulfide biosynthetic process"/>
    <property type="evidence" value="ECO:0007669"/>
    <property type="project" value="UniProtKB-UniRule"/>
</dbReference>
<dbReference type="GO" id="GO:0000103">
    <property type="term" value="P:sulfate assimilation"/>
    <property type="evidence" value="ECO:0007669"/>
    <property type="project" value="UniProtKB-UniRule"/>
</dbReference>
<dbReference type="CDD" id="cd04166">
    <property type="entry name" value="CysN_ATPS"/>
    <property type="match status" value="1"/>
</dbReference>
<dbReference type="CDD" id="cd03695">
    <property type="entry name" value="CysN_NodQ_II"/>
    <property type="match status" value="1"/>
</dbReference>
<dbReference type="CDD" id="cd04095">
    <property type="entry name" value="CysN_NoDQ_III"/>
    <property type="match status" value="1"/>
</dbReference>
<dbReference type="FunFam" id="3.40.50.300:FF:000119">
    <property type="entry name" value="Sulfate adenylyltransferase subunit 1"/>
    <property type="match status" value="1"/>
</dbReference>
<dbReference type="Gene3D" id="3.40.50.300">
    <property type="entry name" value="P-loop containing nucleotide triphosphate hydrolases"/>
    <property type="match status" value="1"/>
</dbReference>
<dbReference type="Gene3D" id="2.40.30.10">
    <property type="entry name" value="Translation factors"/>
    <property type="match status" value="2"/>
</dbReference>
<dbReference type="HAMAP" id="MF_00062">
    <property type="entry name" value="Sulf_adenylyltr_sub1"/>
    <property type="match status" value="1"/>
</dbReference>
<dbReference type="InterPro" id="IPR041757">
    <property type="entry name" value="CysN_GTP-bd"/>
</dbReference>
<dbReference type="InterPro" id="IPR044138">
    <property type="entry name" value="CysN_II"/>
</dbReference>
<dbReference type="InterPro" id="IPR044139">
    <property type="entry name" value="CysN_NoDQ_III"/>
</dbReference>
<dbReference type="InterPro" id="IPR031157">
    <property type="entry name" value="G_TR_CS"/>
</dbReference>
<dbReference type="InterPro" id="IPR054696">
    <property type="entry name" value="GTP-eEF1A_C"/>
</dbReference>
<dbReference type="InterPro" id="IPR027417">
    <property type="entry name" value="P-loop_NTPase"/>
</dbReference>
<dbReference type="InterPro" id="IPR005225">
    <property type="entry name" value="Small_GTP-bd"/>
</dbReference>
<dbReference type="InterPro" id="IPR011779">
    <property type="entry name" value="SO4_adenylTrfase_lsu"/>
</dbReference>
<dbReference type="InterPro" id="IPR000795">
    <property type="entry name" value="T_Tr_GTP-bd_dom"/>
</dbReference>
<dbReference type="InterPro" id="IPR050100">
    <property type="entry name" value="TRAFAC_GTPase_members"/>
</dbReference>
<dbReference type="InterPro" id="IPR009000">
    <property type="entry name" value="Transl_B-barrel_sf"/>
</dbReference>
<dbReference type="InterPro" id="IPR009001">
    <property type="entry name" value="Transl_elong_EF1A/Init_IF2_C"/>
</dbReference>
<dbReference type="NCBIfam" id="TIGR02034">
    <property type="entry name" value="CysN"/>
    <property type="match status" value="1"/>
</dbReference>
<dbReference type="NCBIfam" id="NF003478">
    <property type="entry name" value="PRK05124.1"/>
    <property type="match status" value="1"/>
</dbReference>
<dbReference type="NCBIfam" id="TIGR00231">
    <property type="entry name" value="small_GTP"/>
    <property type="match status" value="1"/>
</dbReference>
<dbReference type="PANTHER" id="PTHR23115">
    <property type="entry name" value="TRANSLATION FACTOR"/>
    <property type="match status" value="1"/>
</dbReference>
<dbReference type="Pfam" id="PF22594">
    <property type="entry name" value="GTP-eEF1A_C"/>
    <property type="match status" value="1"/>
</dbReference>
<dbReference type="Pfam" id="PF00009">
    <property type="entry name" value="GTP_EFTU"/>
    <property type="match status" value="1"/>
</dbReference>
<dbReference type="PRINTS" id="PR00315">
    <property type="entry name" value="ELONGATNFCT"/>
</dbReference>
<dbReference type="SUPFAM" id="SSF50465">
    <property type="entry name" value="EF-Tu/eEF-1alpha/eIF2-gamma C-terminal domain"/>
    <property type="match status" value="1"/>
</dbReference>
<dbReference type="SUPFAM" id="SSF52540">
    <property type="entry name" value="P-loop containing nucleoside triphosphate hydrolases"/>
    <property type="match status" value="1"/>
</dbReference>
<dbReference type="SUPFAM" id="SSF50447">
    <property type="entry name" value="Translation proteins"/>
    <property type="match status" value="1"/>
</dbReference>
<dbReference type="PROSITE" id="PS00301">
    <property type="entry name" value="G_TR_1"/>
    <property type="match status" value="1"/>
</dbReference>
<dbReference type="PROSITE" id="PS51722">
    <property type="entry name" value="G_TR_2"/>
    <property type="match status" value="1"/>
</dbReference>
<gene>
    <name evidence="2" type="primary">cysN</name>
    <name type="ordered locus">BUAPTUC7_417</name>
</gene>
<sequence length="473" mass="54341">MNINMKDNFKKWLDLQQKKTLLKFLTCGSVDDGKSTLIGRLLHDTKQIYDDQLFFLKSDSKRHGTQGNEIDLALVVDGLQSEREQGITIDVAYRYFSTNKRKFIIADTPGHEQYTRNMATGASTCDLSILLVDARKGLSEQTYRHSFISTLLGIKYLIVAINKMDLVNYKQEIFENIKKDFLIFSKKLANDLNIIFIPMSALLGENIVFKTKLMPWYQGVTLLSFLETIKIKNSISSEELRFPVQYINRPNSDFRGYSGILLSGRMHVGQTIKILPENINSRVSRIVTFDKELKKAEIGESITVVLKDEIDINRGDFFVNIDSILQPSQEAIIDIVWMTDNILLAGESYNVKLSGKKIRVYIKEILFRLDVNTLKKVKSHSLVLNSIGRVKIYFSKPVIFDNYSENRMTGNMIFIDLLTNITVGAGMIVNSLDKKGKIPSNKQKDFESDFYDLIIRHFPHWNIPKILMKKVYK</sequence>
<protein>
    <recommendedName>
        <fullName evidence="2">Sulfate adenylyltransferase subunit 1</fullName>
        <ecNumber evidence="2">2.7.7.4</ecNumber>
    </recommendedName>
    <alternativeName>
        <fullName evidence="2">ATP-sulfurylase large subunit</fullName>
    </alternativeName>
    <alternativeName>
        <fullName evidence="2">Sulfate adenylate transferase</fullName>
        <shortName evidence="2">SAT</shortName>
    </alternativeName>
</protein>
<reference key="1">
    <citation type="journal article" date="2009" name="Science">
        <title>The dynamics and time scale of ongoing genomic erosion in symbiotic bacteria.</title>
        <authorList>
            <person name="Moran N.A."/>
            <person name="McLaughlin H.J."/>
            <person name="Sorek R."/>
        </authorList>
    </citation>
    <scope>NUCLEOTIDE SEQUENCE [LARGE SCALE GENOMIC DNA]</scope>
    <source>
        <strain>Tuc7</strain>
    </source>
</reference>
<organism>
    <name type="scientific">Buchnera aphidicola subsp. Acyrthosiphon pisum (strain Tuc7)</name>
    <dbReference type="NCBI Taxonomy" id="561501"/>
    <lineage>
        <taxon>Bacteria</taxon>
        <taxon>Pseudomonadati</taxon>
        <taxon>Pseudomonadota</taxon>
        <taxon>Gammaproteobacteria</taxon>
        <taxon>Enterobacterales</taxon>
        <taxon>Erwiniaceae</taxon>
        <taxon>Buchnera</taxon>
    </lineage>
</organism>
<feature type="chain" id="PRO_1000117911" description="Sulfate adenylyltransferase subunit 1">
    <location>
        <begin position="1"/>
        <end position="473"/>
    </location>
</feature>
<feature type="domain" description="tr-type G">
    <location>
        <begin position="19"/>
        <end position="238"/>
    </location>
</feature>
<feature type="region of interest" description="G1" evidence="1">
    <location>
        <begin position="28"/>
        <end position="35"/>
    </location>
</feature>
<feature type="region of interest" description="G2" evidence="1">
    <location>
        <begin position="86"/>
        <end position="90"/>
    </location>
</feature>
<feature type="region of interest" description="G3" evidence="1">
    <location>
        <begin position="107"/>
        <end position="110"/>
    </location>
</feature>
<feature type="region of interest" description="G4" evidence="1">
    <location>
        <begin position="162"/>
        <end position="165"/>
    </location>
</feature>
<feature type="region of interest" description="G5" evidence="1">
    <location>
        <begin position="200"/>
        <end position="202"/>
    </location>
</feature>
<feature type="binding site" evidence="2">
    <location>
        <begin position="28"/>
        <end position="35"/>
    </location>
    <ligand>
        <name>GTP</name>
        <dbReference type="ChEBI" id="CHEBI:37565"/>
    </ligand>
</feature>
<feature type="binding site" evidence="2">
    <location>
        <begin position="107"/>
        <end position="111"/>
    </location>
    <ligand>
        <name>GTP</name>
        <dbReference type="ChEBI" id="CHEBI:37565"/>
    </ligand>
</feature>
<feature type="binding site" evidence="2">
    <location>
        <begin position="162"/>
        <end position="165"/>
    </location>
    <ligand>
        <name>GTP</name>
        <dbReference type="ChEBI" id="CHEBI:37565"/>
    </ligand>
</feature>
<proteinExistence type="inferred from homology"/>
<keyword id="KW-0067">ATP-binding</keyword>
<keyword id="KW-0342">GTP-binding</keyword>
<keyword id="KW-0547">Nucleotide-binding</keyword>
<keyword id="KW-0548">Nucleotidyltransferase</keyword>
<keyword id="KW-0808">Transferase</keyword>